<reference key="1">
    <citation type="submission" date="2009-03" db="EMBL/GenBank/DDBJ databases">
        <authorList>
            <person name="Warren W."/>
            <person name="Ye L."/>
            <person name="Minx P."/>
            <person name="Worley K."/>
            <person name="Gibbs R."/>
            <person name="Wilson R.K."/>
        </authorList>
    </citation>
    <scope>NUCLEOTIDE SEQUENCE [LARGE SCALE GENOMIC DNA]</scope>
</reference>
<evidence type="ECO:0000250" key="1">
    <source>
        <dbReference type="UniProtKB" id="D3ZQG6"/>
    </source>
</evidence>
<evidence type="ECO:0000250" key="2">
    <source>
        <dbReference type="UniProtKB" id="Q9C040"/>
    </source>
</evidence>
<evidence type="ECO:0000250" key="3">
    <source>
        <dbReference type="UniProtKB" id="Q9ESN6"/>
    </source>
</evidence>
<evidence type="ECO:0000255" key="4">
    <source>
        <dbReference type="PROSITE-ProRule" id="PRU00024"/>
    </source>
</evidence>
<evidence type="ECO:0000255" key="5">
    <source>
        <dbReference type="PROSITE-ProRule" id="PRU00175"/>
    </source>
</evidence>
<evidence type="ECO:0000256" key="6">
    <source>
        <dbReference type="SAM" id="MobiDB-lite"/>
    </source>
</evidence>
<evidence type="ECO:0000305" key="7"/>
<proteinExistence type="inferred from homology"/>
<gene>
    <name type="primary">TRIM2</name>
</gene>
<keyword id="KW-0963">Cytoplasm</keyword>
<keyword id="KW-0479">Metal-binding</keyword>
<keyword id="KW-0597">Phosphoprotein</keyword>
<keyword id="KW-1185">Reference proteome</keyword>
<keyword id="KW-0677">Repeat</keyword>
<keyword id="KW-0808">Transferase</keyword>
<keyword id="KW-0832">Ubl conjugation</keyword>
<keyword id="KW-0833">Ubl conjugation pathway</keyword>
<keyword id="KW-0862">Zinc</keyword>
<keyword id="KW-0863">Zinc-finger</keyword>
<accession>F7H9X2</accession>
<protein>
    <recommendedName>
        <fullName>Tripartite motif-containing protein 2</fullName>
        <ecNumber>2.3.2.27</ecNumber>
    </recommendedName>
    <alternativeName>
        <fullName>E3 ubiquitin-protein ligase TRIM2</fullName>
    </alternativeName>
    <alternativeName>
        <fullName evidence="7">RING-type E3 ubiquitin transferase TRIM2</fullName>
    </alternativeName>
</protein>
<feature type="chain" id="PRO_0000413607" description="Tripartite motif-containing protein 2">
    <location>
        <begin position="1"/>
        <end position="744"/>
    </location>
</feature>
<feature type="repeat" description="Filamin">
    <location>
        <begin position="320"/>
        <end position="421"/>
    </location>
</feature>
<feature type="repeat" description="NHL 1">
    <location>
        <begin position="473"/>
        <end position="516"/>
    </location>
</feature>
<feature type="repeat" description="NHL 2">
    <location>
        <begin position="520"/>
        <end position="563"/>
    </location>
</feature>
<feature type="repeat" description="NHL 3">
    <location>
        <begin position="564"/>
        <end position="605"/>
    </location>
</feature>
<feature type="repeat" description="NHL 4">
    <location>
        <begin position="609"/>
        <end position="652"/>
    </location>
</feature>
<feature type="repeat" description="NHL 5">
    <location>
        <begin position="656"/>
        <end position="699"/>
    </location>
</feature>
<feature type="repeat" description="NHL 6">
    <location>
        <begin position="700"/>
        <end position="743"/>
    </location>
</feature>
<feature type="zinc finger region" description="RING-type" evidence="5">
    <location>
        <begin position="23"/>
        <end position="64"/>
    </location>
</feature>
<feature type="zinc finger region" description="B box-type" evidence="4">
    <location>
        <begin position="113"/>
        <end position="154"/>
    </location>
</feature>
<feature type="region of interest" description="Disordered" evidence="6">
    <location>
        <begin position="432"/>
        <end position="462"/>
    </location>
</feature>
<feature type="binding site" evidence="4">
    <location>
        <position position="118"/>
    </location>
    <ligand>
        <name>Zn(2+)</name>
        <dbReference type="ChEBI" id="CHEBI:29105"/>
    </ligand>
</feature>
<feature type="binding site" evidence="4">
    <location>
        <position position="121"/>
    </location>
    <ligand>
        <name>Zn(2+)</name>
        <dbReference type="ChEBI" id="CHEBI:29105"/>
    </ligand>
</feature>
<feature type="binding site" evidence="4">
    <location>
        <position position="141"/>
    </location>
    <ligand>
        <name>Zn(2+)</name>
        <dbReference type="ChEBI" id="CHEBI:29105"/>
    </ligand>
</feature>
<feature type="binding site" evidence="4">
    <location>
        <position position="146"/>
    </location>
    <ligand>
        <name>Zn(2+)</name>
        <dbReference type="ChEBI" id="CHEBI:29105"/>
    </ligand>
</feature>
<feature type="modified residue" description="Phosphoserine" evidence="1">
    <location>
        <position position="10"/>
    </location>
</feature>
<feature type="modified residue" description="Phosphothreonine" evidence="3">
    <location>
        <position position="371"/>
    </location>
</feature>
<feature type="modified residue" description="Phosphoserine" evidence="3">
    <location>
        <position position="375"/>
    </location>
</feature>
<feature type="modified residue" description="Phosphoserine" evidence="3">
    <location>
        <position position="424"/>
    </location>
</feature>
<feature type="modified residue" description="Phosphoserine" evidence="3">
    <location>
        <position position="428"/>
    </location>
</feature>
<dbReference type="EC" id="2.3.2.27"/>
<dbReference type="EMBL" id="ACFV01002178">
    <property type="status" value="NOT_ANNOTATED_CDS"/>
    <property type="molecule type" value="Genomic_DNA"/>
</dbReference>
<dbReference type="EMBL" id="ACFV01002179">
    <property type="status" value="NOT_ANNOTATED_CDS"/>
    <property type="molecule type" value="Genomic_DNA"/>
</dbReference>
<dbReference type="EMBL" id="ACFV01002180">
    <property type="status" value="NOT_ANNOTATED_CDS"/>
    <property type="molecule type" value="Genomic_DNA"/>
</dbReference>
<dbReference type="EMBL" id="ACFV01002181">
    <property type="status" value="NOT_ANNOTATED_CDS"/>
    <property type="molecule type" value="Genomic_DNA"/>
</dbReference>
<dbReference type="EMBL" id="ACFV01002182">
    <property type="status" value="NOT_ANNOTATED_CDS"/>
    <property type="molecule type" value="Genomic_DNA"/>
</dbReference>
<dbReference type="EMBL" id="ACFV01002183">
    <property type="status" value="NOT_ANNOTATED_CDS"/>
    <property type="molecule type" value="Genomic_DNA"/>
</dbReference>
<dbReference type="EMBL" id="ACFV01002184">
    <property type="status" value="NOT_ANNOTATED_CDS"/>
    <property type="molecule type" value="Genomic_DNA"/>
</dbReference>
<dbReference type="EMBL" id="ACFV01002185">
    <property type="status" value="NOT_ANNOTATED_CDS"/>
    <property type="molecule type" value="Genomic_DNA"/>
</dbReference>
<dbReference type="EMBL" id="ACFV01002186">
    <property type="status" value="NOT_ANNOTATED_CDS"/>
    <property type="molecule type" value="Genomic_DNA"/>
</dbReference>
<dbReference type="EMBL" id="ACFV01002187">
    <property type="status" value="NOT_ANNOTATED_CDS"/>
    <property type="molecule type" value="Genomic_DNA"/>
</dbReference>
<dbReference type="EMBL" id="ACFV01002188">
    <property type="status" value="NOT_ANNOTATED_CDS"/>
    <property type="molecule type" value="Genomic_DNA"/>
</dbReference>
<dbReference type="EMBL" id="ACFV01002189">
    <property type="status" value="NOT_ANNOTATED_CDS"/>
    <property type="molecule type" value="Genomic_DNA"/>
</dbReference>
<dbReference type="EMBL" id="ACFV01002190">
    <property type="status" value="NOT_ANNOTATED_CDS"/>
    <property type="molecule type" value="Genomic_DNA"/>
</dbReference>
<dbReference type="EMBL" id="ACFV01002191">
    <property type="status" value="NOT_ANNOTATED_CDS"/>
    <property type="molecule type" value="Genomic_DNA"/>
</dbReference>
<dbReference type="EMBL" id="ACFV01002192">
    <property type="status" value="NOT_ANNOTATED_CDS"/>
    <property type="molecule type" value="Genomic_DNA"/>
</dbReference>
<dbReference type="EMBL" id="ACFV01002193">
    <property type="status" value="NOT_ANNOTATED_CDS"/>
    <property type="molecule type" value="Genomic_DNA"/>
</dbReference>
<dbReference type="EMBL" id="ACFV01002194">
    <property type="status" value="NOT_ANNOTATED_CDS"/>
    <property type="molecule type" value="Genomic_DNA"/>
</dbReference>
<dbReference type="EMBL" id="ACFV01002195">
    <property type="status" value="NOT_ANNOTATED_CDS"/>
    <property type="molecule type" value="Genomic_DNA"/>
</dbReference>
<dbReference type="EMBL" id="ACFV01002196">
    <property type="status" value="NOT_ANNOTATED_CDS"/>
    <property type="molecule type" value="Genomic_DNA"/>
</dbReference>
<dbReference type="SMR" id="F7H9X2"/>
<dbReference type="FunCoup" id="F7H9X2">
    <property type="interactions" value="1381"/>
</dbReference>
<dbReference type="STRING" id="9483.ENSCJAP00000058710"/>
<dbReference type="eggNOG" id="KOG2177">
    <property type="taxonomic scope" value="Eukaryota"/>
</dbReference>
<dbReference type="HOGENOM" id="CLU_008645_5_0_1"/>
<dbReference type="InParanoid" id="F7H9X2"/>
<dbReference type="TreeFam" id="TF331018"/>
<dbReference type="UniPathway" id="UPA00143"/>
<dbReference type="Proteomes" id="UP000008225">
    <property type="component" value="Unplaced"/>
</dbReference>
<dbReference type="GO" id="GO:0005737">
    <property type="term" value="C:cytoplasm"/>
    <property type="evidence" value="ECO:0007669"/>
    <property type="project" value="UniProtKB-SubCell"/>
</dbReference>
<dbReference type="GO" id="GO:0061630">
    <property type="term" value="F:ubiquitin protein ligase activity"/>
    <property type="evidence" value="ECO:0007669"/>
    <property type="project" value="TreeGrafter"/>
</dbReference>
<dbReference type="GO" id="GO:0004842">
    <property type="term" value="F:ubiquitin-protein transferase activity"/>
    <property type="evidence" value="ECO:0000250"/>
    <property type="project" value="UniProtKB"/>
</dbReference>
<dbReference type="GO" id="GO:0008270">
    <property type="term" value="F:zinc ion binding"/>
    <property type="evidence" value="ECO:0007669"/>
    <property type="project" value="UniProtKB-KW"/>
</dbReference>
<dbReference type="GO" id="GO:0043161">
    <property type="term" value="P:proteasome-mediated ubiquitin-dependent protein catabolic process"/>
    <property type="evidence" value="ECO:0007669"/>
    <property type="project" value="TreeGrafter"/>
</dbReference>
<dbReference type="GO" id="GO:0000209">
    <property type="term" value="P:protein polyubiquitination"/>
    <property type="evidence" value="ECO:0007669"/>
    <property type="project" value="TreeGrafter"/>
</dbReference>
<dbReference type="GO" id="GO:0043523">
    <property type="term" value="P:regulation of neuron apoptotic process"/>
    <property type="evidence" value="ECO:0000250"/>
    <property type="project" value="UniProtKB"/>
</dbReference>
<dbReference type="CDD" id="cd19824">
    <property type="entry name" value="Bbox2_TRIM2_C-VII"/>
    <property type="match status" value="1"/>
</dbReference>
<dbReference type="CDD" id="cd14960">
    <property type="entry name" value="NHL_TRIM2_like"/>
    <property type="match status" value="1"/>
</dbReference>
<dbReference type="CDD" id="cd16767">
    <property type="entry name" value="RING-HC_TRIM2"/>
    <property type="match status" value="1"/>
</dbReference>
<dbReference type="FunFam" id="2.120.10.30:FF:000007">
    <property type="entry name" value="Putative tripartite motif-containing protein 2"/>
    <property type="match status" value="1"/>
</dbReference>
<dbReference type="FunFam" id="2.120.10.30:FF:000004">
    <property type="entry name" value="Tripartite motif containing 2"/>
    <property type="match status" value="1"/>
</dbReference>
<dbReference type="FunFam" id="3.30.40.10:FF:000032">
    <property type="entry name" value="Tripartite motif containing 2"/>
    <property type="match status" value="1"/>
</dbReference>
<dbReference type="FunFam" id="2.60.40.10:FF:000198">
    <property type="entry name" value="Tripartite motif-containing protein 2"/>
    <property type="match status" value="1"/>
</dbReference>
<dbReference type="FunFam" id="3.30.160.60:FF:000154">
    <property type="entry name" value="Tripartite motif-containing protein 2"/>
    <property type="match status" value="1"/>
</dbReference>
<dbReference type="Gene3D" id="3.30.160.60">
    <property type="entry name" value="Classic Zinc Finger"/>
    <property type="match status" value="1"/>
</dbReference>
<dbReference type="Gene3D" id="2.60.40.10">
    <property type="entry name" value="Immunoglobulins"/>
    <property type="match status" value="1"/>
</dbReference>
<dbReference type="Gene3D" id="2.120.10.30">
    <property type="entry name" value="TolB, C-terminal domain"/>
    <property type="match status" value="2"/>
</dbReference>
<dbReference type="Gene3D" id="3.30.40.10">
    <property type="entry name" value="Zinc/RING finger domain, C3HC4 (zinc finger)"/>
    <property type="match status" value="1"/>
</dbReference>
<dbReference type="InterPro" id="IPR011042">
    <property type="entry name" value="6-blade_b-propeller_TolB-like"/>
</dbReference>
<dbReference type="InterPro" id="IPR003649">
    <property type="entry name" value="Bbox_C"/>
</dbReference>
<dbReference type="InterPro" id="IPR017868">
    <property type="entry name" value="Filamin/ABP280_repeat-like"/>
</dbReference>
<dbReference type="InterPro" id="IPR001298">
    <property type="entry name" value="Filamin/ABP280_rpt"/>
</dbReference>
<dbReference type="InterPro" id="IPR013783">
    <property type="entry name" value="Ig-like_fold"/>
</dbReference>
<dbReference type="InterPro" id="IPR014756">
    <property type="entry name" value="Ig_E-set"/>
</dbReference>
<dbReference type="InterPro" id="IPR001258">
    <property type="entry name" value="NHL_repeat"/>
</dbReference>
<dbReference type="InterPro" id="IPR050952">
    <property type="entry name" value="TRIM-NHL_E3_ligases"/>
</dbReference>
<dbReference type="InterPro" id="IPR027370">
    <property type="entry name" value="Znf-RING_euk"/>
</dbReference>
<dbReference type="InterPro" id="IPR000315">
    <property type="entry name" value="Znf_B-box"/>
</dbReference>
<dbReference type="InterPro" id="IPR001841">
    <property type="entry name" value="Znf_RING"/>
</dbReference>
<dbReference type="InterPro" id="IPR013083">
    <property type="entry name" value="Znf_RING/FYVE/PHD"/>
</dbReference>
<dbReference type="InterPro" id="IPR017907">
    <property type="entry name" value="Znf_RING_CS"/>
</dbReference>
<dbReference type="PANTHER" id="PTHR24104">
    <property type="entry name" value="E3 UBIQUITIN-PROTEIN LIGASE NHLRC1-RELATED"/>
    <property type="match status" value="1"/>
</dbReference>
<dbReference type="PANTHER" id="PTHR24104:SF58">
    <property type="entry name" value="TRIPARTITE MOTIF-CONTAINING PROTEIN 2"/>
    <property type="match status" value="1"/>
</dbReference>
<dbReference type="Pfam" id="PF00630">
    <property type="entry name" value="Filamin"/>
    <property type="match status" value="1"/>
</dbReference>
<dbReference type="Pfam" id="PF01436">
    <property type="entry name" value="NHL"/>
    <property type="match status" value="6"/>
</dbReference>
<dbReference type="Pfam" id="PF00643">
    <property type="entry name" value="zf-B_box"/>
    <property type="match status" value="1"/>
</dbReference>
<dbReference type="Pfam" id="PF13445">
    <property type="entry name" value="zf-RING_UBOX"/>
    <property type="match status" value="1"/>
</dbReference>
<dbReference type="SMART" id="SM00502">
    <property type="entry name" value="BBC"/>
    <property type="match status" value="1"/>
</dbReference>
<dbReference type="SMART" id="SM00336">
    <property type="entry name" value="BBOX"/>
    <property type="match status" value="1"/>
</dbReference>
<dbReference type="SMART" id="SM00557">
    <property type="entry name" value="IG_FLMN"/>
    <property type="match status" value="1"/>
</dbReference>
<dbReference type="SMART" id="SM00184">
    <property type="entry name" value="RING"/>
    <property type="match status" value="1"/>
</dbReference>
<dbReference type="SUPFAM" id="SSF57845">
    <property type="entry name" value="B-box zinc-binding domain"/>
    <property type="match status" value="1"/>
</dbReference>
<dbReference type="SUPFAM" id="SSF81296">
    <property type="entry name" value="E set domains"/>
    <property type="match status" value="1"/>
</dbReference>
<dbReference type="SUPFAM" id="SSF101898">
    <property type="entry name" value="NHL repeat"/>
    <property type="match status" value="1"/>
</dbReference>
<dbReference type="SUPFAM" id="SSF57850">
    <property type="entry name" value="RING/U-box"/>
    <property type="match status" value="1"/>
</dbReference>
<dbReference type="PROSITE" id="PS50194">
    <property type="entry name" value="FILAMIN_REPEAT"/>
    <property type="match status" value="1"/>
</dbReference>
<dbReference type="PROSITE" id="PS51125">
    <property type="entry name" value="NHL"/>
    <property type="match status" value="6"/>
</dbReference>
<dbReference type="PROSITE" id="PS50119">
    <property type="entry name" value="ZF_BBOX"/>
    <property type="match status" value="1"/>
</dbReference>
<dbReference type="PROSITE" id="PS00518">
    <property type="entry name" value="ZF_RING_1"/>
    <property type="match status" value="1"/>
</dbReference>
<dbReference type="PROSITE" id="PS50089">
    <property type="entry name" value="ZF_RING_2"/>
    <property type="match status" value="1"/>
</dbReference>
<name>TRIM2_CALJA</name>
<sequence>MASEGTNIPSPVVRQIDKQFLICSICLERYKNPKVLPCLHTFCERCLQNYIPAHSLTLSCPVCRQTSILPEKGVAALQNNFFITNLMDVLQRTPGSNVEESSILETVTAVAAGKPLSCPNHDGNVMEFYCQSCETAMCRECTEGEHAEHPTVPLKDVVEQHKASLQVQLDAVNKRLPEIDSALQFISEIIHQLTNQKASIVDDIHSTFDELQKTLNVRKSVLLMELEVNYGVKHKVLQSQLDTLLQGQESIKSCSNFTAQALNHGTETEVLLVKKQMSEKLNELADQDFPLHPRENDQLDFIVETEGLKKSIHNLGTILTTNAVASETVATGEGLRQTIIGQPMSVTITTKDKDGELCKTGNAYLTAELSTPDGSVADGEILDNKNGTYEFLYTVQKEGDFTLSLRLYDQHIRGSPFKLKVIRSADVSPTTEGVKRRVKSPGSGHVKQKAVKRPASMYSTGKRKENPIEDDLIFRVGTKGRNKGEFTNLQGVAASTSGKILIADSNNQCVQIFSNDGQFKSRFGIRGRSPGQLQRPTGVAVHPSGDIIIADYDNKWVSIFSSDGKFKTKIGSGKLMGPKGVSVDRNGHIIVVDNKACCVFIFQPNGKIVTRFGSRGNGDRQFAGPHFAAVNSNNEIIITDFHNHSVKVFNQEGEFMLKFGSNGEGNGQFNAPTGVAVDSNGNIIVADWGNSRIQVFDGSGSFLSYINTSADPLYGPQGLALTSDGHVVVADSGNHCFKVYRYLQ</sequence>
<organism>
    <name type="scientific">Callithrix jacchus</name>
    <name type="common">White-tufted-ear marmoset</name>
    <dbReference type="NCBI Taxonomy" id="9483"/>
    <lineage>
        <taxon>Eukaryota</taxon>
        <taxon>Metazoa</taxon>
        <taxon>Chordata</taxon>
        <taxon>Craniata</taxon>
        <taxon>Vertebrata</taxon>
        <taxon>Euteleostomi</taxon>
        <taxon>Mammalia</taxon>
        <taxon>Eutheria</taxon>
        <taxon>Euarchontoglires</taxon>
        <taxon>Primates</taxon>
        <taxon>Haplorrhini</taxon>
        <taxon>Platyrrhini</taxon>
        <taxon>Cebidae</taxon>
        <taxon>Callitrichinae</taxon>
        <taxon>Callithrix</taxon>
        <taxon>Callithrix</taxon>
    </lineage>
</organism>
<comment type="function">
    <text evidence="2 3">UBE2D1-dependent E3 ubiquitin-protein ligase that mediates the ubiquitination of NEFL and of phosphorylated BCL2L11. Plays a neuroprotective function. May play a role in neuronal rapid ischemic tolerance. Plays a role in antiviral immunity and limits New World arenavirus infection independently of its ubiquitin ligase activity.</text>
</comment>
<comment type="catalytic activity">
    <reaction>
        <text>S-ubiquitinyl-[E2 ubiquitin-conjugating enzyme]-L-cysteine + [acceptor protein]-L-lysine = [E2 ubiquitin-conjugating enzyme]-L-cysteine + N(6)-ubiquitinyl-[acceptor protein]-L-lysine.</text>
        <dbReference type="EC" id="2.3.2.27"/>
    </reaction>
</comment>
<comment type="pathway">
    <text>Protein modification; protein ubiquitination.</text>
</comment>
<comment type="subunit">
    <text evidence="2 3">Forms homooligomers (By similarity). Interacts with TRIM3; this interaction reduces TRIM2 activity (By similarity). Interacts with myosin V; myosin V may not be a substrate for ubiquitination. Interacts with NEFL. Interacts with phosphorylated BCL2L11. Interacts with SIRPA (By similarity).</text>
</comment>
<comment type="subcellular location">
    <subcellularLocation>
        <location evidence="3">Cytoplasm</location>
    </subcellularLocation>
</comment>
<comment type="domain">
    <text evidence="3">The interaction with myosin V is dependent upon its NHL repeats, which form a beta-propeller (NHL) domain containing six blades.</text>
</comment>
<comment type="PTM">
    <text evidence="3">RING-type zinc finger-dependent and UBE2D1-dependent autoubiquitination.</text>
</comment>
<comment type="similarity">
    <text evidence="7">Belongs to the TRIM/RBCC family.</text>
</comment>